<feature type="chain" id="PRO_0000121005" description="COP9 signalosome complex subunit 7">
    <location>
        <begin position="1"/>
        <end position="205"/>
    </location>
</feature>
<feature type="domain" description="PCI" evidence="2">
    <location>
        <begin position="1"/>
        <end position="135"/>
    </location>
</feature>
<feature type="modified residue" description="Phosphoserine" evidence="3">
    <location>
        <position position="183"/>
    </location>
</feature>
<keyword id="KW-0597">Phosphoprotein</keyword>
<keyword id="KW-1185">Reference proteome</keyword>
<keyword id="KW-0736">Signalosome</keyword>
<dbReference type="EMBL" id="CU329670">
    <property type="protein sequence ID" value="CAB52576.1"/>
    <property type="molecule type" value="Genomic_DNA"/>
</dbReference>
<dbReference type="PIR" id="T37940">
    <property type="entry name" value="T37940"/>
</dbReference>
<dbReference type="RefSeq" id="NP_594814.1">
    <property type="nucleotide sequence ID" value="NM_001020243.2"/>
</dbReference>
<dbReference type="SMR" id="Q9UUJ7"/>
<dbReference type="BioGRID" id="278603">
    <property type="interactions" value="31"/>
</dbReference>
<dbReference type="FunCoup" id="Q9UUJ7">
    <property type="interactions" value="103"/>
</dbReference>
<dbReference type="STRING" id="284812.Q9UUJ7"/>
<dbReference type="iPTMnet" id="Q9UUJ7"/>
<dbReference type="PaxDb" id="4896-SPAC1952.12c.1"/>
<dbReference type="EnsemblFungi" id="SPAC1952.12c.1">
    <property type="protein sequence ID" value="SPAC1952.12c.1:pep"/>
    <property type="gene ID" value="SPAC1952.12c"/>
</dbReference>
<dbReference type="GeneID" id="2542127"/>
<dbReference type="KEGG" id="spo:2542127"/>
<dbReference type="PomBase" id="SPAC1952.12c">
    <property type="gene designation" value="csn71"/>
</dbReference>
<dbReference type="VEuPathDB" id="FungiDB:SPAC1952.12c"/>
<dbReference type="eggNOG" id="KOG3250">
    <property type="taxonomic scope" value="Eukaryota"/>
</dbReference>
<dbReference type="HOGENOM" id="CLU_1338200_0_0_1"/>
<dbReference type="InParanoid" id="Q9UUJ7"/>
<dbReference type="OMA" id="VSWAMER"/>
<dbReference type="PhylomeDB" id="Q9UUJ7"/>
<dbReference type="PRO" id="PR:Q9UUJ7"/>
<dbReference type="Proteomes" id="UP000002485">
    <property type="component" value="Chromosome I"/>
</dbReference>
<dbReference type="GO" id="GO:0008180">
    <property type="term" value="C:COP9 signalosome"/>
    <property type="evidence" value="ECO:0000318"/>
    <property type="project" value="GO_Central"/>
</dbReference>
<dbReference type="GO" id="GO:0005829">
    <property type="term" value="C:cytosol"/>
    <property type="evidence" value="ECO:0007005"/>
    <property type="project" value="PomBase"/>
</dbReference>
<dbReference type="GO" id="GO:0005634">
    <property type="term" value="C:nucleus"/>
    <property type="evidence" value="ECO:0007005"/>
    <property type="project" value="PomBase"/>
</dbReference>
<dbReference type="GO" id="GO:0000338">
    <property type="term" value="P:protein deneddylation"/>
    <property type="evidence" value="ECO:0000304"/>
    <property type="project" value="PomBase"/>
</dbReference>
<dbReference type="InterPro" id="IPR045237">
    <property type="entry name" value="COPS7/eIF3m"/>
</dbReference>
<dbReference type="InterPro" id="IPR000717">
    <property type="entry name" value="PCI_dom"/>
</dbReference>
<dbReference type="PANTHER" id="PTHR15350:SF5">
    <property type="entry name" value="COP9 SIGNALOSOME COMPLEX SUBUNIT 7"/>
    <property type="match status" value="1"/>
</dbReference>
<dbReference type="PANTHER" id="PTHR15350">
    <property type="entry name" value="COP9 SIGNALOSOME COMPLEX SUBUNIT 7/DENDRITIC CELL PROTEIN GA17"/>
    <property type="match status" value="1"/>
</dbReference>
<dbReference type="Pfam" id="PF01399">
    <property type="entry name" value="PCI"/>
    <property type="match status" value="1"/>
</dbReference>
<dbReference type="SMART" id="SM00088">
    <property type="entry name" value="PINT"/>
    <property type="match status" value="1"/>
</dbReference>
<dbReference type="PROSITE" id="PS50250">
    <property type="entry name" value="PCI"/>
    <property type="match status" value="1"/>
</dbReference>
<organism>
    <name type="scientific">Schizosaccharomyces pombe (strain 972 / ATCC 24843)</name>
    <name type="common">Fission yeast</name>
    <dbReference type="NCBI Taxonomy" id="284812"/>
    <lineage>
        <taxon>Eukaryota</taxon>
        <taxon>Fungi</taxon>
        <taxon>Dikarya</taxon>
        <taxon>Ascomycota</taxon>
        <taxon>Taphrinomycotina</taxon>
        <taxon>Schizosaccharomycetes</taxon>
        <taxon>Schizosaccharomycetales</taxon>
        <taxon>Schizosaccharomycetaceae</taxon>
        <taxon>Schizosaccharomyces</taxon>
    </lineage>
</organism>
<sequence length="205" mass="23839">MEEKISQAIDDPNVFCFQELWIECQEVQKSQPIDSAVLRTLEIFCRGDIRDASSEWNELRFKKLRLLTLIDLANRHVGSSVSFETILVHLQLDRLPPSDPTFTVEYYIMQAMMNQILVGKINAKTQTLHVSWALERFLDSKRIDEMKYSLDRFIERCSNILFQLDAGTPSVSKSFKRASRMSSSDGIDYMVFDKRPRPDDTDFDL</sequence>
<proteinExistence type="evidence at protein level"/>
<comment type="function">
    <text evidence="1">Component of the COP9 signalosome (CSN) complex that acts as an regulator of the ubiquitin (Ubl) conjugation pathway by mediating the deneddylation of the cullin subunit of SCF-type E3 ubiquitin-protein ligase complexes.</text>
</comment>
<comment type="subunit">
    <text evidence="1">Component of the COP9 signalosome (CSN) complex.</text>
</comment>
<comment type="similarity">
    <text evidence="4">Belongs to the CSN7/EIF3M family. CSN7 subfamily.</text>
</comment>
<reference key="1">
    <citation type="journal article" date="2002" name="Nature">
        <title>The genome sequence of Schizosaccharomyces pombe.</title>
        <authorList>
            <person name="Wood V."/>
            <person name="Gwilliam R."/>
            <person name="Rajandream M.A."/>
            <person name="Lyne M.H."/>
            <person name="Lyne R."/>
            <person name="Stewart A."/>
            <person name="Sgouros J.G."/>
            <person name="Peat N."/>
            <person name="Hayles J."/>
            <person name="Baker S.G."/>
            <person name="Basham D."/>
            <person name="Bowman S."/>
            <person name="Brooks K."/>
            <person name="Brown D."/>
            <person name="Brown S."/>
            <person name="Chillingworth T."/>
            <person name="Churcher C.M."/>
            <person name="Collins M."/>
            <person name="Connor R."/>
            <person name="Cronin A."/>
            <person name="Davis P."/>
            <person name="Feltwell T."/>
            <person name="Fraser A."/>
            <person name="Gentles S."/>
            <person name="Goble A."/>
            <person name="Hamlin N."/>
            <person name="Harris D.E."/>
            <person name="Hidalgo J."/>
            <person name="Hodgson G."/>
            <person name="Holroyd S."/>
            <person name="Hornsby T."/>
            <person name="Howarth S."/>
            <person name="Huckle E.J."/>
            <person name="Hunt S."/>
            <person name="Jagels K."/>
            <person name="James K.D."/>
            <person name="Jones L."/>
            <person name="Jones M."/>
            <person name="Leather S."/>
            <person name="McDonald S."/>
            <person name="McLean J."/>
            <person name="Mooney P."/>
            <person name="Moule S."/>
            <person name="Mungall K.L."/>
            <person name="Murphy L.D."/>
            <person name="Niblett D."/>
            <person name="Odell C."/>
            <person name="Oliver K."/>
            <person name="O'Neil S."/>
            <person name="Pearson D."/>
            <person name="Quail M.A."/>
            <person name="Rabbinowitsch E."/>
            <person name="Rutherford K.M."/>
            <person name="Rutter S."/>
            <person name="Saunders D."/>
            <person name="Seeger K."/>
            <person name="Sharp S."/>
            <person name="Skelton J."/>
            <person name="Simmonds M.N."/>
            <person name="Squares R."/>
            <person name="Squares S."/>
            <person name="Stevens K."/>
            <person name="Taylor K."/>
            <person name="Taylor R.G."/>
            <person name="Tivey A."/>
            <person name="Walsh S.V."/>
            <person name="Warren T."/>
            <person name="Whitehead S."/>
            <person name="Woodward J.R."/>
            <person name="Volckaert G."/>
            <person name="Aert R."/>
            <person name="Robben J."/>
            <person name="Grymonprez B."/>
            <person name="Weltjens I."/>
            <person name="Vanstreels E."/>
            <person name="Rieger M."/>
            <person name="Schaefer M."/>
            <person name="Mueller-Auer S."/>
            <person name="Gabel C."/>
            <person name="Fuchs M."/>
            <person name="Duesterhoeft A."/>
            <person name="Fritzc C."/>
            <person name="Holzer E."/>
            <person name="Moestl D."/>
            <person name="Hilbert H."/>
            <person name="Borzym K."/>
            <person name="Langer I."/>
            <person name="Beck A."/>
            <person name="Lehrach H."/>
            <person name="Reinhardt R."/>
            <person name="Pohl T.M."/>
            <person name="Eger P."/>
            <person name="Zimmermann W."/>
            <person name="Wedler H."/>
            <person name="Wambutt R."/>
            <person name="Purnelle B."/>
            <person name="Goffeau A."/>
            <person name="Cadieu E."/>
            <person name="Dreano S."/>
            <person name="Gloux S."/>
            <person name="Lelaure V."/>
            <person name="Mottier S."/>
            <person name="Galibert F."/>
            <person name="Aves S.J."/>
            <person name="Xiang Z."/>
            <person name="Hunt C."/>
            <person name="Moore K."/>
            <person name="Hurst S.M."/>
            <person name="Lucas M."/>
            <person name="Rochet M."/>
            <person name="Gaillardin C."/>
            <person name="Tallada V.A."/>
            <person name="Garzon A."/>
            <person name="Thode G."/>
            <person name="Daga R.R."/>
            <person name="Cruzado L."/>
            <person name="Jimenez J."/>
            <person name="Sanchez M."/>
            <person name="del Rey F."/>
            <person name="Benito J."/>
            <person name="Dominguez A."/>
            <person name="Revuelta J.L."/>
            <person name="Moreno S."/>
            <person name="Armstrong J."/>
            <person name="Forsburg S.L."/>
            <person name="Cerutti L."/>
            <person name="Lowe T."/>
            <person name="McCombie W.R."/>
            <person name="Paulsen I."/>
            <person name="Potashkin J."/>
            <person name="Shpakovski G.V."/>
            <person name="Ussery D."/>
            <person name="Barrell B.G."/>
            <person name="Nurse P."/>
        </authorList>
    </citation>
    <scope>NUCLEOTIDE SEQUENCE [LARGE SCALE GENOMIC DNA]</scope>
    <source>
        <strain>972 / ATCC 24843</strain>
    </source>
</reference>
<reference key="2">
    <citation type="journal article" date="2008" name="J. Proteome Res.">
        <title>Phosphoproteome analysis of fission yeast.</title>
        <authorList>
            <person name="Wilson-Grady J.T."/>
            <person name="Villen J."/>
            <person name="Gygi S.P."/>
        </authorList>
    </citation>
    <scope>PHOSPHORYLATION [LARGE SCALE ANALYSIS] AT SER-183</scope>
    <scope>IDENTIFICATION BY MASS SPECTROMETRY</scope>
</reference>
<gene>
    <name type="primary">csn71</name>
    <name type="synonym">csn7a</name>
    <name type="ORF">SPAC1952.12c</name>
</gene>
<accession>Q9UUJ7</accession>
<protein>
    <recommendedName>
        <fullName>COP9 signalosome complex subunit 7</fullName>
    </recommendedName>
</protein>
<evidence type="ECO:0000250" key="1"/>
<evidence type="ECO:0000255" key="2">
    <source>
        <dbReference type="PROSITE-ProRule" id="PRU01185"/>
    </source>
</evidence>
<evidence type="ECO:0000269" key="3">
    <source>
    </source>
</evidence>
<evidence type="ECO:0000305" key="4"/>
<name>CSN7_SCHPO</name>